<name>LSPA_BORDL</name>
<feature type="chain" id="PRO_1000097231" description="Lipoprotein signal peptidase">
    <location>
        <begin position="1"/>
        <end position="170"/>
    </location>
</feature>
<feature type="transmembrane region" description="Helical" evidence="1">
    <location>
        <begin position="13"/>
        <end position="33"/>
    </location>
</feature>
<feature type="transmembrane region" description="Helical" evidence="1">
    <location>
        <begin position="72"/>
        <end position="92"/>
    </location>
</feature>
<feature type="transmembrane region" description="Helical" evidence="1">
    <location>
        <begin position="96"/>
        <end position="113"/>
    </location>
</feature>
<feature type="transmembrane region" description="Helical" evidence="1">
    <location>
        <begin position="116"/>
        <end position="136"/>
    </location>
</feature>
<feature type="transmembrane region" description="Helical" evidence="1">
    <location>
        <begin position="142"/>
        <end position="162"/>
    </location>
</feature>
<feature type="active site" evidence="1">
    <location>
        <position position="124"/>
    </location>
</feature>
<feature type="active site" evidence="1">
    <location>
        <position position="146"/>
    </location>
</feature>
<proteinExistence type="inferred from homology"/>
<accession>B5RM28</accession>
<dbReference type="EC" id="3.4.23.36" evidence="1"/>
<dbReference type="EMBL" id="CP000976">
    <property type="protein sequence ID" value="ACH93414.1"/>
    <property type="molecule type" value="Genomic_DNA"/>
</dbReference>
<dbReference type="RefSeq" id="WP_012538225.1">
    <property type="nucleotide sequence ID" value="NC_011229.1"/>
</dbReference>
<dbReference type="SMR" id="B5RM28"/>
<dbReference type="STRING" id="412419.BDU_473"/>
<dbReference type="KEGG" id="bdu:BDU_473"/>
<dbReference type="eggNOG" id="COG0597">
    <property type="taxonomic scope" value="Bacteria"/>
</dbReference>
<dbReference type="HOGENOM" id="CLU_083252_3_1_12"/>
<dbReference type="OrthoDB" id="9810259at2"/>
<dbReference type="UniPathway" id="UPA00665"/>
<dbReference type="Proteomes" id="UP000000611">
    <property type="component" value="Chromosome"/>
</dbReference>
<dbReference type="GO" id="GO:0005886">
    <property type="term" value="C:plasma membrane"/>
    <property type="evidence" value="ECO:0007669"/>
    <property type="project" value="UniProtKB-SubCell"/>
</dbReference>
<dbReference type="GO" id="GO:0004190">
    <property type="term" value="F:aspartic-type endopeptidase activity"/>
    <property type="evidence" value="ECO:0007669"/>
    <property type="project" value="UniProtKB-UniRule"/>
</dbReference>
<dbReference type="GO" id="GO:0006508">
    <property type="term" value="P:proteolysis"/>
    <property type="evidence" value="ECO:0007669"/>
    <property type="project" value="UniProtKB-KW"/>
</dbReference>
<dbReference type="HAMAP" id="MF_00161">
    <property type="entry name" value="LspA"/>
    <property type="match status" value="1"/>
</dbReference>
<dbReference type="InterPro" id="IPR001872">
    <property type="entry name" value="Peptidase_A8"/>
</dbReference>
<dbReference type="NCBIfam" id="TIGR00077">
    <property type="entry name" value="lspA"/>
    <property type="match status" value="1"/>
</dbReference>
<dbReference type="PANTHER" id="PTHR33695">
    <property type="entry name" value="LIPOPROTEIN SIGNAL PEPTIDASE"/>
    <property type="match status" value="1"/>
</dbReference>
<dbReference type="PANTHER" id="PTHR33695:SF1">
    <property type="entry name" value="LIPOPROTEIN SIGNAL PEPTIDASE"/>
    <property type="match status" value="1"/>
</dbReference>
<dbReference type="Pfam" id="PF01252">
    <property type="entry name" value="Peptidase_A8"/>
    <property type="match status" value="1"/>
</dbReference>
<dbReference type="PRINTS" id="PR00781">
    <property type="entry name" value="LIPOSIGPTASE"/>
</dbReference>
<dbReference type="PROSITE" id="PS00855">
    <property type="entry name" value="SPASE_II"/>
    <property type="match status" value="1"/>
</dbReference>
<comment type="function">
    <text evidence="1">This protein specifically catalyzes the removal of signal peptides from prolipoproteins.</text>
</comment>
<comment type="catalytic activity">
    <reaction evidence="1">
        <text>Release of signal peptides from bacterial membrane prolipoproteins. Hydrolyzes -Xaa-Yaa-Zaa-|-(S,diacylglyceryl)Cys-, in which Xaa is hydrophobic (preferably Leu), and Yaa (Ala or Ser) and Zaa (Gly or Ala) have small, neutral side chains.</text>
        <dbReference type="EC" id="3.4.23.36"/>
    </reaction>
</comment>
<comment type="pathway">
    <text evidence="1">Protein modification; lipoprotein biosynthesis (signal peptide cleavage).</text>
</comment>
<comment type="subcellular location">
    <subcellularLocation>
        <location evidence="1">Cell inner membrane</location>
        <topology evidence="1">Multi-pass membrane protein</topology>
    </subcellularLocation>
</comment>
<comment type="similarity">
    <text evidence="1">Belongs to the peptidase A8 family.</text>
</comment>
<gene>
    <name evidence="1" type="primary">lspA</name>
    <name type="ordered locus">BDU_473</name>
</gene>
<protein>
    <recommendedName>
        <fullName evidence="1">Lipoprotein signal peptidase</fullName>
        <ecNumber evidence="1">3.4.23.36</ecNumber>
    </recommendedName>
    <alternativeName>
        <fullName evidence="1">Prolipoprotein signal peptidase</fullName>
    </alternativeName>
    <alternativeName>
        <fullName evidence="1">Signal peptidase II</fullName>
        <shortName evidence="1">SPase II</shortName>
    </alternativeName>
</protein>
<evidence type="ECO:0000255" key="1">
    <source>
        <dbReference type="HAMAP-Rule" id="MF_00161"/>
    </source>
</evidence>
<sequence>MNINRNRLVSNLIFISILVFFDQWSKYLVVTYVRLGTEYLSFFGDLFKIIHVRNTGVLFSLGSNIDSSLKNLFFLIIPIIILVFVFSFSLKENNKVSRFALILILSGGIGNIIDRLFRPLGVVDFLDVKFFGIFGLQRWPTFNFADSYVVVGMIVFIIYDLFTKDKSTNL</sequence>
<organism>
    <name type="scientific">Borrelia duttonii (strain Ly)</name>
    <dbReference type="NCBI Taxonomy" id="412419"/>
    <lineage>
        <taxon>Bacteria</taxon>
        <taxon>Pseudomonadati</taxon>
        <taxon>Spirochaetota</taxon>
        <taxon>Spirochaetia</taxon>
        <taxon>Spirochaetales</taxon>
        <taxon>Borreliaceae</taxon>
        <taxon>Borrelia</taxon>
    </lineage>
</organism>
<reference key="1">
    <citation type="journal article" date="2008" name="PLoS Genet.">
        <title>The genome of Borrelia recurrentis, the agent of deadly louse-borne relapsing fever, is a degraded subset of tick-borne Borrelia duttonii.</title>
        <authorList>
            <person name="Lescot M."/>
            <person name="Audic S."/>
            <person name="Robert C."/>
            <person name="Nguyen T.T."/>
            <person name="Blanc G."/>
            <person name="Cutler S.J."/>
            <person name="Wincker P."/>
            <person name="Couloux A."/>
            <person name="Claverie J.-M."/>
            <person name="Raoult D."/>
            <person name="Drancourt M."/>
        </authorList>
    </citation>
    <scope>NUCLEOTIDE SEQUENCE [LARGE SCALE GENOMIC DNA]</scope>
    <source>
        <strain>Ly</strain>
    </source>
</reference>
<keyword id="KW-0064">Aspartyl protease</keyword>
<keyword id="KW-0997">Cell inner membrane</keyword>
<keyword id="KW-1003">Cell membrane</keyword>
<keyword id="KW-0378">Hydrolase</keyword>
<keyword id="KW-0472">Membrane</keyword>
<keyword id="KW-0645">Protease</keyword>
<keyword id="KW-0812">Transmembrane</keyword>
<keyword id="KW-1133">Transmembrane helix</keyword>